<proteinExistence type="evidence at protein level"/>
<dbReference type="EC" id="2.3.2.27" evidence="8 9"/>
<dbReference type="EMBL" id="AC000106">
    <property type="protein sequence ID" value="AAB70402.1"/>
    <property type="status" value="ALT_SEQ"/>
    <property type="molecule type" value="Genomic_DNA"/>
</dbReference>
<dbReference type="EMBL" id="CP002684">
    <property type="protein sequence ID" value="AEE28388.1"/>
    <property type="molecule type" value="Genomic_DNA"/>
</dbReference>
<dbReference type="EMBL" id="CP002684">
    <property type="protein sequence ID" value="AEE28389.1"/>
    <property type="molecule type" value="Genomic_DNA"/>
</dbReference>
<dbReference type="EMBL" id="CP002684">
    <property type="protein sequence ID" value="AEE28390.1"/>
    <property type="molecule type" value="Genomic_DNA"/>
</dbReference>
<dbReference type="EMBL" id="CP002684">
    <property type="protein sequence ID" value="ANM61128.1"/>
    <property type="molecule type" value="Genomic_DNA"/>
</dbReference>
<dbReference type="EMBL" id="AK316783">
    <property type="protein sequence ID" value="BAH19501.1"/>
    <property type="molecule type" value="mRNA"/>
</dbReference>
<dbReference type="EMBL" id="AK317241">
    <property type="protein sequence ID" value="BAH19922.1"/>
    <property type="molecule type" value="mRNA"/>
</dbReference>
<dbReference type="EMBL" id="AB493444">
    <property type="protein sequence ID" value="BAH30282.1"/>
    <property type="molecule type" value="mRNA"/>
</dbReference>
<dbReference type="EMBL" id="AK230041">
    <property type="protein sequence ID" value="BAF01863.1"/>
    <property type="molecule type" value="mRNA"/>
</dbReference>
<dbReference type="PIR" id="F86222">
    <property type="entry name" value="F86222"/>
</dbReference>
<dbReference type="RefSeq" id="NP_001031007.1">
    <molecule id="F4HZD1-1"/>
    <property type="nucleotide sequence ID" value="NM_001035930.1"/>
</dbReference>
<dbReference type="RefSeq" id="NP_001318961.1">
    <molecule id="F4HZD1-1"/>
    <property type="nucleotide sequence ID" value="NM_001331803.1"/>
</dbReference>
<dbReference type="RefSeq" id="NP_172380.2">
    <molecule id="F4HZD1-2"/>
    <property type="nucleotide sequence ID" value="NM_100777.3"/>
</dbReference>
<dbReference type="RefSeq" id="NP_973798.1">
    <molecule id="F4HZD1-2"/>
    <property type="nucleotide sequence ID" value="NM_202069.3"/>
</dbReference>
<dbReference type="SMR" id="F4HZD1"/>
<dbReference type="FunCoup" id="F4HZD1">
    <property type="interactions" value="797"/>
</dbReference>
<dbReference type="STRING" id="3702.F4HZD1"/>
<dbReference type="iPTMnet" id="F4HZD1"/>
<dbReference type="PaxDb" id="3702-AT1G09060.3"/>
<dbReference type="ProteomicsDB" id="183538"/>
<dbReference type="ProteomicsDB" id="191960"/>
<dbReference type="EnsemblPlants" id="AT1G09060.1">
    <molecule id="F4HZD1-2"/>
    <property type="protein sequence ID" value="AT1G09060.1"/>
    <property type="gene ID" value="AT1G09060"/>
</dbReference>
<dbReference type="EnsemblPlants" id="AT1G09060.2">
    <molecule id="F4HZD1-2"/>
    <property type="protein sequence ID" value="AT1G09060.2"/>
    <property type="gene ID" value="AT1G09060"/>
</dbReference>
<dbReference type="EnsemblPlants" id="AT1G09060.3">
    <molecule id="F4HZD1-1"/>
    <property type="protein sequence ID" value="AT1G09060.3"/>
    <property type="gene ID" value="AT1G09060"/>
</dbReference>
<dbReference type="EnsemblPlants" id="AT1G09060.4">
    <molecule id="F4HZD1-1"/>
    <property type="protein sequence ID" value="AT1G09060.4"/>
    <property type="gene ID" value="AT1G09060"/>
</dbReference>
<dbReference type="GeneID" id="837427"/>
<dbReference type="Gramene" id="AT1G09060.1">
    <molecule id="F4HZD1-2"/>
    <property type="protein sequence ID" value="AT1G09060.1"/>
    <property type="gene ID" value="AT1G09060"/>
</dbReference>
<dbReference type="Gramene" id="AT1G09060.2">
    <molecule id="F4HZD1-2"/>
    <property type="protein sequence ID" value="AT1G09060.2"/>
    <property type="gene ID" value="AT1G09060"/>
</dbReference>
<dbReference type="Gramene" id="AT1G09060.3">
    <molecule id="F4HZD1-1"/>
    <property type="protein sequence ID" value="AT1G09060.3"/>
    <property type="gene ID" value="AT1G09060"/>
</dbReference>
<dbReference type="Gramene" id="AT1G09060.4">
    <molecule id="F4HZD1-1"/>
    <property type="protein sequence ID" value="AT1G09060.4"/>
    <property type="gene ID" value="AT1G09060"/>
</dbReference>
<dbReference type="KEGG" id="ath:AT1G09060"/>
<dbReference type="Araport" id="AT1G09060"/>
<dbReference type="TAIR" id="AT1G09060">
    <property type="gene designation" value="JMJ24"/>
</dbReference>
<dbReference type="eggNOG" id="KOG1356">
    <property type="taxonomic scope" value="Eukaryota"/>
</dbReference>
<dbReference type="HOGENOM" id="CLU_001811_2_0_1"/>
<dbReference type="InParanoid" id="F4HZD1"/>
<dbReference type="PRO" id="PR:F4HZD1"/>
<dbReference type="Proteomes" id="UP000006548">
    <property type="component" value="Chromosome 1"/>
</dbReference>
<dbReference type="ExpressionAtlas" id="F4HZD1">
    <property type="expression patterns" value="baseline and differential"/>
</dbReference>
<dbReference type="GO" id="GO:0031011">
    <property type="term" value="C:Ino80 complex"/>
    <property type="evidence" value="ECO:0000314"/>
    <property type="project" value="TAIR"/>
</dbReference>
<dbReference type="GO" id="GO:0005634">
    <property type="term" value="C:nucleus"/>
    <property type="evidence" value="ECO:0000314"/>
    <property type="project" value="UniProtKB"/>
</dbReference>
<dbReference type="GO" id="GO:0048188">
    <property type="term" value="C:Set1C/COMPASS complex"/>
    <property type="evidence" value="ECO:0000314"/>
    <property type="project" value="TAIR"/>
</dbReference>
<dbReference type="GO" id="GO:0042393">
    <property type="term" value="F:histone binding"/>
    <property type="evidence" value="ECO:0000314"/>
    <property type="project" value="UniProtKB"/>
</dbReference>
<dbReference type="GO" id="GO:0042803">
    <property type="term" value="F:protein homodimerization activity"/>
    <property type="evidence" value="ECO:0000314"/>
    <property type="project" value="UniProtKB"/>
</dbReference>
<dbReference type="GO" id="GO:0000976">
    <property type="term" value="F:transcription cis-regulatory region binding"/>
    <property type="evidence" value="ECO:0000314"/>
    <property type="project" value="TAIR"/>
</dbReference>
<dbReference type="GO" id="GO:0031624">
    <property type="term" value="F:ubiquitin conjugating enzyme binding"/>
    <property type="evidence" value="ECO:0000353"/>
    <property type="project" value="UniProtKB"/>
</dbReference>
<dbReference type="GO" id="GO:0061630">
    <property type="term" value="F:ubiquitin protein ligase activity"/>
    <property type="evidence" value="ECO:0000314"/>
    <property type="project" value="UniProtKB"/>
</dbReference>
<dbReference type="GO" id="GO:0008270">
    <property type="term" value="F:zinc ion binding"/>
    <property type="evidence" value="ECO:0007669"/>
    <property type="project" value="UniProtKB-KW"/>
</dbReference>
<dbReference type="GO" id="GO:0031507">
    <property type="term" value="P:heterochromatin formation"/>
    <property type="evidence" value="ECO:0000315"/>
    <property type="project" value="UniProtKB"/>
</dbReference>
<dbReference type="GO" id="GO:0090310">
    <property type="term" value="P:negative regulation of DNA methylation-dependent heterochromatin formation"/>
    <property type="evidence" value="ECO:0000315"/>
    <property type="project" value="UniProtKB"/>
</dbReference>
<dbReference type="GO" id="GO:0010628">
    <property type="term" value="P:positive regulation of gene expression"/>
    <property type="evidence" value="ECO:0000315"/>
    <property type="project" value="TAIR"/>
</dbReference>
<dbReference type="GO" id="GO:0043161">
    <property type="term" value="P:proteasome-mediated ubiquitin-dependent protein catabolic process"/>
    <property type="evidence" value="ECO:0000314"/>
    <property type="project" value="UniProtKB"/>
</dbReference>
<dbReference type="GO" id="GO:0070920">
    <property type="term" value="P:regulation of regulatory ncRNA processing"/>
    <property type="evidence" value="ECO:0000315"/>
    <property type="project" value="UniProtKB"/>
</dbReference>
<dbReference type="Gene3D" id="2.60.120.650">
    <property type="entry name" value="Cupin"/>
    <property type="match status" value="1"/>
</dbReference>
<dbReference type="InterPro" id="IPR045109">
    <property type="entry name" value="JHDM2-like"/>
</dbReference>
<dbReference type="InterPro" id="IPR003347">
    <property type="entry name" value="JmjC_dom"/>
</dbReference>
<dbReference type="InterPro" id="IPR014977">
    <property type="entry name" value="WRC_dom"/>
</dbReference>
<dbReference type="InterPro" id="IPR018866">
    <property type="entry name" value="Znf-4CXXC_R1"/>
</dbReference>
<dbReference type="InterPro" id="IPR001841">
    <property type="entry name" value="Znf_RING"/>
</dbReference>
<dbReference type="PANTHER" id="PTHR12549:SF17">
    <property type="entry name" value="E3 UBIQUITIN-PROTEIN LIGASE JMJ24"/>
    <property type="match status" value="1"/>
</dbReference>
<dbReference type="PANTHER" id="PTHR12549">
    <property type="entry name" value="JMJC DOMAIN-CONTAINING HISTONE DEMETHYLATION PROTEIN"/>
    <property type="match status" value="1"/>
</dbReference>
<dbReference type="Pfam" id="PF02373">
    <property type="entry name" value="JmjC"/>
    <property type="match status" value="1"/>
</dbReference>
<dbReference type="Pfam" id="PF08879">
    <property type="entry name" value="WRC"/>
    <property type="match status" value="1"/>
</dbReference>
<dbReference type="Pfam" id="PF10497">
    <property type="entry name" value="zf-4CXXC_R1"/>
    <property type="match status" value="1"/>
</dbReference>
<dbReference type="SMART" id="SM00558">
    <property type="entry name" value="JmjC"/>
    <property type="match status" value="1"/>
</dbReference>
<dbReference type="SUPFAM" id="SSF51197">
    <property type="entry name" value="Clavaminate synthase-like"/>
    <property type="match status" value="1"/>
</dbReference>
<dbReference type="PROSITE" id="PS51184">
    <property type="entry name" value="JMJC"/>
    <property type="match status" value="1"/>
</dbReference>
<dbReference type="PROSITE" id="PS51667">
    <property type="entry name" value="WRC"/>
    <property type="match status" value="1"/>
</dbReference>
<dbReference type="PROSITE" id="PS50089">
    <property type="entry name" value="ZF_RING_2"/>
    <property type="match status" value="1"/>
</dbReference>
<accession>F4HZD1</accession>
<accession>B9DFI4</accession>
<accession>B9DGQ5</accession>
<accession>C0SUU1</accession>
<accession>O04024</accession>
<accession>Q0WLZ4</accession>
<name>JMJ24_ARATH</name>
<sequence>MQVNFDETCDSVIRMNANEQTRSANGIGNGNGESIPGIPDDLRCKRSDGKQWRCTAMSMADKTVCEKHYIQAKKRAANSAFRANQKKAKRRSSLGETDTYSEGKMDDFELPVTSIDHYNNGLASASKSNGRLEKRHNKSLMRYSPETPMMRSFSPRVAVDLNDDLGRDVVMFEEGYRSYRTPPSVAVMDPTRNRSHQSTSPMEYSAASTDVSAESLGEICHQCQRKDRERIISCLKCNQRAFCHNCLSARYSEISLEEVEKVCPACRGLCDCKSCLRSDNTIKVRIREIPVLDKLQYLYRLLSAVLPVIKQIHLEQCMEVELEKRLREVEIDLVRARLKADEQMCCNVCRIPVVDYYRHCPNCSYDLCLRCCQDLREESSVTISGTNQNVQDRKGAPKLKLNFSYKFPEWEANGDGSIPCPPKEYGGCGSHSLNLARIFKMNWVAKLVKNAEEIVSGCKLSDLLNPDMCDSRFCKFAEREESGDNYVYSPSLETIKTDGVAKFEQQWAEGRLVTVKMVLDDSSCSRWDPETIWRDIDELSDEKLREHDPFLKAINCLDGLEVDVRLGEFTRAYKDGKNQETGLPLLWKLKDWPSPSASEEFIFYQRPEFIRSFPFLEYIHPRLGLLNVAAKLPHYSLQNDSGPKIYVSCGTYQEISAGDSLTGIHYNMRDMVYLLVHTSEETTFERVRKTKPVPEEPDQKMSENESLLSPEQKLRDGELHDLSLGEASMEKNEPELALTVNPENLTENGDNMESSCTSSCAGGAQWDVFRRQDVPKLSGYLQRTFQKPDNIQTDFVSRPLYEGLFLNEHHKRQLRDEFGVEPWTFEQHRGEAIFIPAGCPFQITNLQSNIQVALDFLCPESVGESARLAEEIRCLPNDHEAKLQILEIGKISLYAASSAIKEVQKLVLDPKFGAELGFEDSNLTKAVSHNLDEATKRPQQNSCT</sequence>
<protein>
    <recommendedName>
        <fullName evidence="12 13">E3 ubiquitin-protein ligase JMJ24</fullName>
        <ecNumber evidence="8 9">2.3.2.27</ecNumber>
    </recommendedName>
    <alternativeName>
        <fullName evidence="11 13">Inactive histone demethylase JMJ24</fullName>
    </alternativeName>
    <alternativeName>
        <fullName evidence="11">Jumonji domain-containing protein 24</fullName>
        <shortName evidence="11">AtJMJ24</shortName>
        <shortName evidence="11">Protein JUMONJI 24</shortName>
    </alternativeName>
</protein>
<feature type="chain" id="PRO_0000456191" description="E3 ubiquitin-protein ligase JMJ24">
    <location>
        <begin position="1"/>
        <end position="944"/>
    </location>
</feature>
<feature type="domain" description="WRC" evidence="4">
    <location>
        <begin position="38"/>
        <end position="83"/>
    </location>
</feature>
<feature type="domain" description="JmjC" evidence="2">
    <location>
        <begin position="621"/>
        <end position="873"/>
    </location>
</feature>
<feature type="zinc finger region" description="PHD-type; atypical" evidence="1">
    <location>
        <begin position="217"/>
        <end position="269"/>
    </location>
</feature>
<feature type="region of interest" description="Disordered" evidence="5">
    <location>
        <begin position="20"/>
        <end position="40"/>
    </location>
</feature>
<feature type="region of interest" description="Disordered" evidence="5">
    <location>
        <begin position="77"/>
        <end position="103"/>
    </location>
</feature>
<feature type="region of interest" description="Disordered" evidence="5">
    <location>
        <begin position="685"/>
        <end position="715"/>
    </location>
</feature>
<feature type="short sequence motif" description="Nuclear localization signal 1" evidence="3">
    <location>
        <begin position="73"/>
        <end position="80"/>
    </location>
</feature>
<feature type="short sequence motif" description="Nuclear localization signal 2" evidence="3">
    <location>
        <begin position="323"/>
        <end position="330"/>
    </location>
</feature>
<feature type="compositionally biased region" description="Basic and acidic residues" evidence="5">
    <location>
        <begin position="685"/>
        <end position="703"/>
    </location>
</feature>
<feature type="binding site" evidence="1">
    <location>
        <position position="220"/>
    </location>
    <ligand>
        <name>Zn(2+)</name>
        <dbReference type="ChEBI" id="CHEBI:29105"/>
        <label>1</label>
    </ligand>
</feature>
<feature type="binding site" evidence="1">
    <location>
        <position position="223"/>
    </location>
    <ligand>
        <name>Zn(2+)</name>
        <dbReference type="ChEBI" id="CHEBI:29105"/>
        <label>1</label>
    </ligand>
</feature>
<feature type="binding site" evidence="1">
    <location>
        <position position="234"/>
    </location>
    <ligand>
        <name>Zn(2+)</name>
        <dbReference type="ChEBI" id="CHEBI:29105"/>
        <label>2</label>
    </ligand>
</feature>
<feature type="binding site" evidence="1">
    <location>
        <position position="237"/>
    </location>
    <ligand>
        <name>Zn(2+)</name>
        <dbReference type="ChEBI" id="CHEBI:29105"/>
        <label>2</label>
    </ligand>
</feature>
<feature type="binding site" evidence="1">
    <location>
        <position position="243"/>
    </location>
    <ligand>
        <name>Zn(2+)</name>
        <dbReference type="ChEBI" id="CHEBI:29105"/>
        <label>1</label>
    </ligand>
</feature>
<feature type="binding site" evidence="1">
    <location>
        <position position="246"/>
    </location>
    <ligand>
        <name>Zn(2+)</name>
        <dbReference type="ChEBI" id="CHEBI:29105"/>
        <label>1</label>
    </ligand>
</feature>
<feature type="binding site" evidence="1">
    <location>
        <position position="263"/>
    </location>
    <ligand>
        <name>Zn(2+)</name>
        <dbReference type="ChEBI" id="CHEBI:29105"/>
        <label>2</label>
    </ligand>
</feature>
<feature type="binding site" evidence="1">
    <location>
        <position position="266"/>
    </location>
    <ligand>
        <name>Zn(2+)</name>
        <dbReference type="ChEBI" id="CHEBI:29105"/>
        <label>2</label>
    </ligand>
</feature>
<feature type="splice variant" id="VSP_061594" description="In isoform 2.">
    <location>
        <begin position="1"/>
        <end position="14"/>
    </location>
</feature>
<feature type="mutagenesis site" description="Impaired self-ubiquitination and E3 ubiquitin ligase activity; when associated with S-263." evidence="8">
    <original>C</original>
    <variation>S</variation>
    <location>
        <position position="243"/>
    </location>
</feature>
<feature type="mutagenesis site" description="Impaired self-ubiquitination and E3 ubiquitin ligase activity; when associated with S-263." evidence="8">
    <original>H</original>
    <variation>A</variation>
    <location>
        <position position="244"/>
    </location>
</feature>
<feature type="mutagenesis site" description="Impaired self-ubiquitination and E3 ubiquitin ligase activity; when associated with S-243. Impaired self-ubiquitination and E3 ubiquitin ligase activity; when associated with A-244." evidence="8">
    <original>C</original>
    <variation>S</variation>
    <location>
        <position position="263"/>
    </location>
</feature>
<evidence type="ECO:0000255" key="1">
    <source>
        <dbReference type="PROSITE-ProRule" id="PRU00146"/>
    </source>
</evidence>
<evidence type="ECO:0000255" key="2">
    <source>
        <dbReference type="PROSITE-ProRule" id="PRU00538"/>
    </source>
</evidence>
<evidence type="ECO:0000255" key="3">
    <source>
        <dbReference type="PROSITE-ProRule" id="PRU00768"/>
    </source>
</evidence>
<evidence type="ECO:0000255" key="4">
    <source>
        <dbReference type="PROSITE-ProRule" id="PRU01002"/>
    </source>
</evidence>
<evidence type="ECO:0000256" key="5">
    <source>
        <dbReference type="SAM" id="MobiDB-lite"/>
    </source>
</evidence>
<evidence type="ECO:0000269" key="6">
    <source>
    </source>
</evidence>
<evidence type="ECO:0000269" key="7">
    <source>
    </source>
</evidence>
<evidence type="ECO:0000269" key="8">
    <source>
    </source>
</evidence>
<evidence type="ECO:0000269" key="9">
    <source>
    </source>
</evidence>
<evidence type="ECO:0000269" key="10">
    <source>
    </source>
</evidence>
<evidence type="ECO:0000303" key="11">
    <source>
    </source>
</evidence>
<evidence type="ECO:0000303" key="12">
    <source>
    </source>
</evidence>
<evidence type="ECO:0000303" key="13">
    <source>
    </source>
</evidence>
<evidence type="ECO:0000305" key="14"/>
<evidence type="ECO:0000312" key="15">
    <source>
        <dbReference type="Araport" id="AT1G09060"/>
    </source>
</evidence>
<evidence type="ECO:0000312" key="16">
    <source>
        <dbReference type="EMBL" id="AAB70402.1"/>
    </source>
</evidence>
<reference key="1">
    <citation type="journal article" date="2000" name="Nature">
        <title>Sequence and analysis of chromosome 1 of the plant Arabidopsis thaliana.</title>
        <authorList>
            <person name="Theologis A."/>
            <person name="Ecker J.R."/>
            <person name="Palm C.J."/>
            <person name="Federspiel N.A."/>
            <person name="Kaul S."/>
            <person name="White O."/>
            <person name="Alonso J."/>
            <person name="Altafi H."/>
            <person name="Araujo R."/>
            <person name="Bowman C.L."/>
            <person name="Brooks S.Y."/>
            <person name="Buehler E."/>
            <person name="Chan A."/>
            <person name="Chao Q."/>
            <person name="Chen H."/>
            <person name="Cheuk R.F."/>
            <person name="Chin C.W."/>
            <person name="Chung M.K."/>
            <person name="Conn L."/>
            <person name="Conway A.B."/>
            <person name="Conway A.R."/>
            <person name="Creasy T.H."/>
            <person name="Dewar K."/>
            <person name="Dunn P."/>
            <person name="Etgu P."/>
            <person name="Feldblyum T.V."/>
            <person name="Feng J.-D."/>
            <person name="Fong B."/>
            <person name="Fujii C.Y."/>
            <person name="Gill J.E."/>
            <person name="Goldsmith A.D."/>
            <person name="Haas B."/>
            <person name="Hansen N.F."/>
            <person name="Hughes B."/>
            <person name="Huizar L."/>
            <person name="Hunter J.L."/>
            <person name="Jenkins J."/>
            <person name="Johnson-Hopson C."/>
            <person name="Khan S."/>
            <person name="Khaykin E."/>
            <person name="Kim C.J."/>
            <person name="Koo H.L."/>
            <person name="Kremenetskaia I."/>
            <person name="Kurtz D.B."/>
            <person name="Kwan A."/>
            <person name="Lam B."/>
            <person name="Langin-Hooper S."/>
            <person name="Lee A."/>
            <person name="Lee J.M."/>
            <person name="Lenz C.A."/>
            <person name="Li J.H."/>
            <person name="Li Y.-P."/>
            <person name="Lin X."/>
            <person name="Liu S.X."/>
            <person name="Liu Z.A."/>
            <person name="Luros J.S."/>
            <person name="Maiti R."/>
            <person name="Marziali A."/>
            <person name="Militscher J."/>
            <person name="Miranda M."/>
            <person name="Nguyen M."/>
            <person name="Nierman W.C."/>
            <person name="Osborne B.I."/>
            <person name="Pai G."/>
            <person name="Peterson J."/>
            <person name="Pham P.K."/>
            <person name="Rizzo M."/>
            <person name="Rooney T."/>
            <person name="Rowley D."/>
            <person name="Sakano H."/>
            <person name="Salzberg S.L."/>
            <person name="Schwartz J.R."/>
            <person name="Shinn P."/>
            <person name="Southwick A.M."/>
            <person name="Sun H."/>
            <person name="Tallon L.J."/>
            <person name="Tambunga G."/>
            <person name="Toriumi M.J."/>
            <person name="Town C.D."/>
            <person name="Utterback T."/>
            <person name="Van Aken S."/>
            <person name="Vaysberg M."/>
            <person name="Vysotskaia V.S."/>
            <person name="Walker M."/>
            <person name="Wu D."/>
            <person name="Yu G."/>
            <person name="Fraser C.M."/>
            <person name="Venter J.C."/>
            <person name="Davis R.W."/>
        </authorList>
    </citation>
    <scope>NUCLEOTIDE SEQUENCE [LARGE SCALE GENOMIC DNA]</scope>
    <source>
        <strain>cv. Columbia</strain>
    </source>
</reference>
<reference key="2">
    <citation type="journal article" date="2017" name="Plant J.">
        <title>Araport11: a complete reannotation of the Arabidopsis thaliana reference genome.</title>
        <authorList>
            <person name="Cheng C.Y."/>
            <person name="Krishnakumar V."/>
            <person name="Chan A.P."/>
            <person name="Thibaud-Nissen F."/>
            <person name="Schobel S."/>
            <person name="Town C.D."/>
        </authorList>
    </citation>
    <scope>GENOME REANNOTATION</scope>
    <source>
        <strain>cv. Columbia</strain>
    </source>
</reference>
<reference key="3">
    <citation type="journal article" date="2009" name="DNA Res.">
        <title>Analysis of multiple occurrences of alternative splicing events in Arabidopsis thaliana using novel sequenced full-length cDNAs.</title>
        <authorList>
            <person name="Iida K."/>
            <person name="Fukami-Kobayashi K."/>
            <person name="Toyoda A."/>
            <person name="Sakaki Y."/>
            <person name="Kobayashi M."/>
            <person name="Seki M."/>
            <person name="Shinozaki K."/>
        </authorList>
    </citation>
    <scope>NUCLEOTIDE SEQUENCE [LARGE SCALE MRNA] (ISOFORM 2)</scope>
    <source>
        <strain>cv. Columbia</strain>
        <tissue>Rosette leaf</tissue>
    </source>
</reference>
<reference key="4">
    <citation type="submission" date="2009-03" db="EMBL/GenBank/DDBJ databases">
        <title>ORF cloning and analysis of Arabidopsis transcription factor genes.</title>
        <authorList>
            <person name="Fujita M."/>
        </authorList>
    </citation>
    <scope>NUCLEOTIDE SEQUENCE [LARGE SCALE MRNA] OF 1-911 (ISOFORM 2)</scope>
</reference>
<reference key="5">
    <citation type="submission" date="2006-07" db="EMBL/GenBank/DDBJ databases">
        <title>Large-scale analysis of RIKEN Arabidopsis full-length (RAFL) cDNAs.</title>
        <authorList>
            <person name="Totoki Y."/>
            <person name="Seki M."/>
            <person name="Ishida J."/>
            <person name="Nakajima M."/>
            <person name="Enju A."/>
            <person name="Kamiya A."/>
            <person name="Narusaka M."/>
            <person name="Shin-i T."/>
            <person name="Nakagawa M."/>
            <person name="Sakamoto N."/>
            <person name="Oishi K."/>
            <person name="Kohara Y."/>
            <person name="Kobayashi M."/>
            <person name="Toyoda A."/>
            <person name="Sakaki Y."/>
            <person name="Sakurai T."/>
            <person name="Iida K."/>
            <person name="Akiyama K."/>
            <person name="Satou M."/>
            <person name="Toyoda T."/>
            <person name="Konagaya A."/>
            <person name="Carninci P."/>
            <person name="Kawai J."/>
            <person name="Hayashizaki Y."/>
            <person name="Shinozaki K."/>
        </authorList>
    </citation>
    <scope>NUCLEOTIDE SEQUENCE [LARGE SCALE MRNA] OF 557-944 (ISOFORM 1/2)</scope>
    <source>
        <strain>cv. Columbia</strain>
    </source>
</reference>
<reference key="6">
    <citation type="journal article" date="2008" name="J. Integr. Plant Biol.">
        <title>Comparative analysis of JmjC domain-containing proteins reveals the potential histone demethylases in Arabidopsis and rice.</title>
        <authorList>
            <person name="Lu F."/>
            <person name="Li G."/>
            <person name="Cui X."/>
            <person name="Liu C."/>
            <person name="Wang X.-J."/>
            <person name="Cao X."/>
        </authorList>
    </citation>
    <scope>GENE FAMILY</scope>
    <scope>NOMENCLATURE</scope>
    <scope>TISSUE SPECIFICITY</scope>
</reference>
<reference key="7">
    <citation type="journal article" date="2015" name="Plant J.">
        <title>JMJ24 binds to RDR2 and is required for the basal level transcription of silenced loci in Arabidopsis.</title>
        <authorList>
            <person name="Deng S."/>
            <person name="Xu J."/>
            <person name="Liu J."/>
            <person name="Kim S.-H."/>
            <person name="Shi S."/>
            <person name="Chua N.-H."/>
        </authorList>
    </citation>
    <scope>FUNCTION</scope>
    <scope>DISRUPTION PHENOTYPE</scope>
    <scope>INTERACTION WITH RDR2</scope>
    <scope>SUBCELLULAR LOCATION</scope>
    <source>
        <strain>cv. Columbia</strain>
    </source>
</reference>
<reference key="8">
    <citation type="journal article" date="2016" name="Genes Dev.">
        <title>JMJ24 targets CHROMOMETHYLASE3 for proteasomal degradation in Arabidopsis.</title>
        <authorList>
            <person name="Deng S."/>
            <person name="Jang I.-C."/>
            <person name="Su L."/>
            <person name="Xu J."/>
            <person name="Chua N.-H."/>
        </authorList>
    </citation>
    <scope>FUNCTION</scope>
    <scope>MUTAGENESIS OF CYS-243; HIS-244 AND CYS-263</scope>
    <scope>CATALYTIC ACTIVITY</scope>
    <scope>PTM</scope>
    <scope>DOMAIN</scope>
    <scope>SUBUNIT</scope>
    <scope>INTERACTION WITH CMT3</scope>
    <source>
        <strain>cv. Columbia</strain>
    </source>
</reference>
<reference key="9">
    <citation type="journal article" date="2016" name="Plant Physiol.">
        <title>A JUMONJI protein with E3 ligase and histone H3 binding activities affects transposon silencing in Arabidopsis.</title>
        <authorList>
            <person name="Kabelitz T."/>
            <person name="Brzezinka K."/>
            <person name="Friedrich T."/>
            <person name="Gorka M."/>
            <person name="Graf A."/>
            <person name="Kappel C."/>
            <person name="Baeurle I."/>
        </authorList>
    </citation>
    <scope>FUNCTION</scope>
    <scope>DISRUPTION PHENOTYPE</scope>
    <scope>CATALYTIC ACTIVITY</scope>
    <scope>PTM</scope>
    <scope>INTERACTION WITH UBC10</scope>
    <scope>SUBCELLULAR LOCATION</scope>
    <scope>DOMAIN</scope>
    <source>
        <strain>cv. Columbia</strain>
    </source>
</reference>
<reference key="10">
    <citation type="journal article" date="2017" name="Gene Expr. Patterns">
        <title>JMJ24 antagonizes histone H3K9 demethylase IBM1/JMJ25 function and interacts with RNAi pathways for gene silencing.</title>
        <authorList>
            <person name="Audonnet L."/>
            <person name="Shen Y."/>
            <person name="Zhou D.-X."/>
        </authorList>
    </citation>
    <scope>FUNCTION</scope>
    <scope>DISRUPTION PHENOTYPE</scope>
    <scope>TISSUE SPECIFICITY</scope>
    <source>
        <strain>cv. Columbia</strain>
        <strain>cv. Wassilewskija</strain>
    </source>
</reference>
<organism>
    <name type="scientific">Arabidopsis thaliana</name>
    <name type="common">Mouse-ear cress</name>
    <dbReference type="NCBI Taxonomy" id="3702"/>
    <lineage>
        <taxon>Eukaryota</taxon>
        <taxon>Viridiplantae</taxon>
        <taxon>Streptophyta</taxon>
        <taxon>Embryophyta</taxon>
        <taxon>Tracheophyta</taxon>
        <taxon>Spermatophyta</taxon>
        <taxon>Magnoliopsida</taxon>
        <taxon>eudicotyledons</taxon>
        <taxon>Gunneridae</taxon>
        <taxon>Pentapetalae</taxon>
        <taxon>rosids</taxon>
        <taxon>malvids</taxon>
        <taxon>Brassicales</taxon>
        <taxon>Brassicaceae</taxon>
        <taxon>Camelineae</taxon>
        <taxon>Arabidopsis</taxon>
    </lineage>
</organism>
<comment type="function">
    <text evidence="7 8 9 10">Binds histone H3 but seems to have lost demethylase activity probably due to its inability to bind iron Fe(2+) (PubMed:26979329). Possesses E3 ubiquitin ligase activity and targets directly CMT3 for proteasomal degradation to initiate destabilization of the heterochromatic state (e.g. CHG cytosine methylation and H3K9me2) of endogenous silenced loci (PubMed:26798133, PubMed:26979329). Required for the removal of repressive H3K9me2 histone marks to facilitate the transcription of AtSN1, AtMu1c, solo LTR and SDC, thus counteracting their transcriptional silencing (PubMed:26119694, PubMed:26979329). Mainly required to promote the basal level transcription of silenced loci such as TE and repeats targeted by RNA-dependent DNA methylation (RdDM) for silencing, a specialized branch of the RNA interference (RNAi) pathway (PubMed:26119694, PubMed:26979329, PubMed:28400174). Also cooperates with RNAi pathways for gene silencing both by contributing to the production of 24-nt siRNA to initiate RdDM and by recruiting RDR2 to enable local transcripts to make dsRNA (PubMed:26119694, PubMed:28400174). Antagonizes histone H3K9 demethylase IBM1/JMJ25 function (PubMed:28400174).</text>
</comment>
<comment type="catalytic activity">
    <reaction evidence="8 9">
        <text>S-ubiquitinyl-[E2 ubiquitin-conjugating enzyme]-L-cysteine + [acceptor protein]-L-lysine = [E2 ubiquitin-conjugating enzyme]-L-cysteine + N(6)-ubiquitinyl-[acceptor protein]-L-lysine.</text>
        <dbReference type="EC" id="2.3.2.27"/>
    </reaction>
</comment>
<comment type="subunit">
    <text evidence="7 8 9">Homodimer (PubMed:26798133). Interacts with RDR2 (PubMed:26119694). Binds to CMT3 (PubMed:26798133). Associates with the E2 ubiquitin-conjugating enzyme UBC10 (PubMed:26979329).</text>
</comment>
<comment type="subcellular location">
    <subcellularLocation>
        <location evidence="3 7 9">Nucleus</location>
    </subcellularLocation>
</comment>
<comment type="alternative products">
    <event type="alternative splicing"/>
    <isoform>
        <id>F4HZD1-1</id>
        <name>1</name>
        <sequence type="displayed"/>
    </isoform>
    <isoform>
        <id>F4HZD1-2</id>
        <name>2</name>
        <sequence type="described" ref="VSP_061594"/>
    </isoform>
</comment>
<comment type="tissue specificity">
    <text evidence="6 10">Expressed in inflorescences, flowers, roots, siliques, leaves and stems, especially in the vasculature (mainly phloem), with highest levels in floral organs.</text>
</comment>
<comment type="domain">
    <text evidence="8">The RING-type domain is necessary for E3 ubiquitin ligase activity.</text>
</comment>
<comment type="domain">
    <text evidence="9">The JmjC domain is involved in histone H3 binding.</text>
</comment>
<comment type="PTM">
    <text evidence="8 9">Self-ubiquitinates.</text>
</comment>
<comment type="disruption phenotype">
    <text evidence="7 8 9 10">Reduced RNA-dependent DNA methylation (RdDM) target transcripts levels (PubMed:26119694). Increased DNA (e.g. CHG cytosine methylation) and histone (e.g. H3K9me2) methylation, including on FWA, QQS and SDC loci and on retrotransposon-derived solo long terminal repeat (solo LTR), AtSN1 and SDC loci leading to their reduced expression (PubMed:26119694, PubMed:26798133). Increased silencing of the DNA transposon AtMu1c leading to slightly decreased transcript levels (PubMed:26979329). Lower 24-nt small RNAs (smRNAs) accumulation as a result of AtSN1 derepression (PubMed:26119694). The double mutant rdr2-1 jmj24-1 exhibits an increased expression of retrotransposon-derived solo long terminal repeat (solo LTR) and SDC due to their derepression (PubMed:26119694). Several subtle developmental defects (e.g. slightly larger organ, abnormal floral organs and altered inflorescence branching) by modified expression of a relatively small number of genes at the vegetative stage (PubMed:28400174). Complements partially growth defects and expression changes caused by the loss of JMJ25/IBM1 mostly at vegetative stage, but the double mutant jmj24-3 ibm1-4 has synergistic effect on root growth (PubMed:28400174).</text>
</comment>
<comment type="miscellaneous">
    <text evidence="9">Misses iron Fe(2+)-binding sites required for demethylase activity.</text>
</comment>
<comment type="similarity">
    <text evidence="14">Belongs to the JARID1 histone demethylase family.</text>
</comment>
<comment type="sequence caution" evidence="14">
    <conflict type="erroneous gene model prediction">
        <sequence resource="EMBL-CDS" id="AAB70402"/>
    </conflict>
</comment>
<gene>
    <name evidence="11" type="primary">JMJ24</name>
    <name evidence="15" type="ordered locus">At1g09060</name>
    <name evidence="16" type="ORF">F7G19.7</name>
</gene>
<keyword id="KW-0025">Alternative splicing</keyword>
<keyword id="KW-0479">Metal-binding</keyword>
<keyword id="KW-0539">Nucleus</keyword>
<keyword id="KW-1185">Reference proteome</keyword>
<keyword id="KW-0804">Transcription</keyword>
<keyword id="KW-0805">Transcription regulation</keyword>
<keyword id="KW-0808">Transferase</keyword>
<keyword id="KW-0832">Ubl conjugation</keyword>
<keyword id="KW-0833">Ubl conjugation pathway</keyword>
<keyword id="KW-0862">Zinc</keyword>
<keyword id="KW-0863">Zinc-finger</keyword>